<name>ATPL_BACC3</name>
<dbReference type="EMBL" id="CP001407">
    <property type="protein sequence ID" value="ACO29397.1"/>
    <property type="molecule type" value="Genomic_DNA"/>
</dbReference>
<dbReference type="RefSeq" id="WP_000052064.1">
    <property type="nucleotide sequence ID" value="NZ_CP009318.1"/>
</dbReference>
<dbReference type="SMR" id="C1F0N3"/>
<dbReference type="GeneID" id="93005813"/>
<dbReference type="KEGG" id="bcx:BCA_5455"/>
<dbReference type="PATRIC" id="fig|572264.18.peg.5377"/>
<dbReference type="Proteomes" id="UP000002210">
    <property type="component" value="Chromosome"/>
</dbReference>
<dbReference type="GO" id="GO:0005886">
    <property type="term" value="C:plasma membrane"/>
    <property type="evidence" value="ECO:0007669"/>
    <property type="project" value="UniProtKB-SubCell"/>
</dbReference>
<dbReference type="GO" id="GO:0045259">
    <property type="term" value="C:proton-transporting ATP synthase complex"/>
    <property type="evidence" value="ECO:0007669"/>
    <property type="project" value="UniProtKB-KW"/>
</dbReference>
<dbReference type="GO" id="GO:0033177">
    <property type="term" value="C:proton-transporting two-sector ATPase complex, proton-transporting domain"/>
    <property type="evidence" value="ECO:0007669"/>
    <property type="project" value="InterPro"/>
</dbReference>
<dbReference type="GO" id="GO:0008289">
    <property type="term" value="F:lipid binding"/>
    <property type="evidence" value="ECO:0007669"/>
    <property type="project" value="UniProtKB-KW"/>
</dbReference>
<dbReference type="GO" id="GO:0046933">
    <property type="term" value="F:proton-transporting ATP synthase activity, rotational mechanism"/>
    <property type="evidence" value="ECO:0007669"/>
    <property type="project" value="UniProtKB-UniRule"/>
</dbReference>
<dbReference type="CDD" id="cd18185">
    <property type="entry name" value="ATP-synt_Fo_c_ATPE"/>
    <property type="match status" value="1"/>
</dbReference>
<dbReference type="FunFam" id="1.20.20.10:FF:000004">
    <property type="entry name" value="ATP synthase subunit c"/>
    <property type="match status" value="1"/>
</dbReference>
<dbReference type="Gene3D" id="1.20.20.10">
    <property type="entry name" value="F1F0 ATP synthase subunit C"/>
    <property type="match status" value="1"/>
</dbReference>
<dbReference type="HAMAP" id="MF_01396">
    <property type="entry name" value="ATP_synth_c_bact"/>
    <property type="match status" value="1"/>
</dbReference>
<dbReference type="InterPro" id="IPR005953">
    <property type="entry name" value="ATP_synth_csu_bac/chlpt"/>
</dbReference>
<dbReference type="InterPro" id="IPR000454">
    <property type="entry name" value="ATP_synth_F0_csu"/>
</dbReference>
<dbReference type="InterPro" id="IPR020537">
    <property type="entry name" value="ATP_synth_F0_csu_DDCD_BS"/>
</dbReference>
<dbReference type="InterPro" id="IPR038662">
    <property type="entry name" value="ATP_synth_F0_csu_sf"/>
</dbReference>
<dbReference type="InterPro" id="IPR002379">
    <property type="entry name" value="ATPase_proteolipid_c-like_dom"/>
</dbReference>
<dbReference type="InterPro" id="IPR035921">
    <property type="entry name" value="F/V-ATP_Csub_sf"/>
</dbReference>
<dbReference type="NCBIfam" id="TIGR01260">
    <property type="entry name" value="ATP_synt_c"/>
    <property type="match status" value="1"/>
</dbReference>
<dbReference type="NCBIfam" id="NF005363">
    <property type="entry name" value="PRK06876.1"/>
    <property type="match status" value="1"/>
</dbReference>
<dbReference type="PANTHER" id="PTHR10031">
    <property type="entry name" value="ATP SYNTHASE LIPID-BINDING PROTEIN, MITOCHONDRIAL"/>
    <property type="match status" value="1"/>
</dbReference>
<dbReference type="PANTHER" id="PTHR10031:SF0">
    <property type="entry name" value="ATPASE PROTEIN 9"/>
    <property type="match status" value="1"/>
</dbReference>
<dbReference type="Pfam" id="PF00137">
    <property type="entry name" value="ATP-synt_C"/>
    <property type="match status" value="1"/>
</dbReference>
<dbReference type="PRINTS" id="PR00124">
    <property type="entry name" value="ATPASEC"/>
</dbReference>
<dbReference type="SUPFAM" id="SSF81333">
    <property type="entry name" value="F1F0 ATP synthase subunit C"/>
    <property type="match status" value="1"/>
</dbReference>
<dbReference type="PROSITE" id="PS00605">
    <property type="entry name" value="ATPASE_C"/>
    <property type="match status" value="1"/>
</dbReference>
<feature type="chain" id="PRO_1000184327" description="ATP synthase subunit c">
    <location>
        <begin position="1"/>
        <end position="72"/>
    </location>
</feature>
<feature type="transmembrane region" description="Helical" evidence="1">
    <location>
        <begin position="1"/>
        <end position="21"/>
    </location>
</feature>
<feature type="transmembrane region" description="Helical" evidence="1">
    <location>
        <begin position="49"/>
        <end position="69"/>
    </location>
</feature>
<feature type="site" description="Reversibly protonated during proton transport" evidence="1">
    <location>
        <position position="56"/>
    </location>
</feature>
<accession>C1F0N3</accession>
<organism>
    <name type="scientific">Bacillus cereus (strain 03BB102)</name>
    <dbReference type="NCBI Taxonomy" id="572264"/>
    <lineage>
        <taxon>Bacteria</taxon>
        <taxon>Bacillati</taxon>
        <taxon>Bacillota</taxon>
        <taxon>Bacilli</taxon>
        <taxon>Bacillales</taxon>
        <taxon>Bacillaceae</taxon>
        <taxon>Bacillus</taxon>
        <taxon>Bacillus cereus group</taxon>
    </lineage>
</organism>
<proteinExistence type="inferred from homology"/>
<protein>
    <recommendedName>
        <fullName evidence="1">ATP synthase subunit c</fullName>
    </recommendedName>
    <alternativeName>
        <fullName evidence="1">ATP synthase F(0) sector subunit c</fullName>
    </alternativeName>
    <alternativeName>
        <fullName evidence="1">F-type ATPase subunit c</fullName>
        <shortName evidence="1">F-ATPase subunit c</shortName>
    </alternativeName>
    <alternativeName>
        <fullName evidence="1">Lipid-binding protein</fullName>
    </alternativeName>
</protein>
<gene>
    <name evidence="1" type="primary">atpE</name>
    <name type="ordered locus">BCA_5455</name>
</gene>
<sequence length="72" mass="7213">MSLGVIAAAIAIGLSALGAGIGNGLIVSRTIEGVARQPELKGALQTIMFIGVALVEALPIIGVVIAFIVMNK</sequence>
<keyword id="KW-0066">ATP synthesis</keyword>
<keyword id="KW-1003">Cell membrane</keyword>
<keyword id="KW-0138">CF(0)</keyword>
<keyword id="KW-0375">Hydrogen ion transport</keyword>
<keyword id="KW-0406">Ion transport</keyword>
<keyword id="KW-0446">Lipid-binding</keyword>
<keyword id="KW-0472">Membrane</keyword>
<keyword id="KW-0812">Transmembrane</keyword>
<keyword id="KW-1133">Transmembrane helix</keyword>
<keyword id="KW-0813">Transport</keyword>
<comment type="function">
    <text evidence="1">F(1)F(0) ATP synthase produces ATP from ADP in the presence of a proton or sodium gradient. F-type ATPases consist of two structural domains, F(1) containing the extramembraneous catalytic core and F(0) containing the membrane proton channel, linked together by a central stalk and a peripheral stalk. During catalysis, ATP synthesis in the catalytic domain of F(1) is coupled via a rotary mechanism of the central stalk subunits to proton translocation.</text>
</comment>
<comment type="function">
    <text evidence="1">Key component of the F(0) channel; it plays a direct role in translocation across the membrane. A homomeric c-ring of between 10-14 subunits forms the central stalk rotor element with the F(1) delta and epsilon subunits.</text>
</comment>
<comment type="subunit">
    <text evidence="1">F-type ATPases have 2 components, F(1) - the catalytic core - and F(0) - the membrane proton channel. F(1) has five subunits: alpha(3), beta(3), gamma(1), delta(1), epsilon(1). F(0) has three main subunits: a(1), b(2) and c(10-14). The alpha and beta chains form an alternating ring which encloses part of the gamma chain. F(1) is attached to F(0) by a central stalk formed by the gamma and epsilon chains, while a peripheral stalk is formed by the delta and b chains.</text>
</comment>
<comment type="subcellular location">
    <subcellularLocation>
        <location evidence="1">Cell membrane</location>
        <topology evidence="1">Multi-pass membrane protein</topology>
    </subcellularLocation>
</comment>
<comment type="similarity">
    <text evidence="1">Belongs to the ATPase C chain family.</text>
</comment>
<evidence type="ECO:0000255" key="1">
    <source>
        <dbReference type="HAMAP-Rule" id="MF_01396"/>
    </source>
</evidence>
<reference key="1">
    <citation type="submission" date="2009-02" db="EMBL/GenBank/DDBJ databases">
        <title>Genome sequence of Bacillus cereus 03BB102.</title>
        <authorList>
            <person name="Dodson R.J."/>
            <person name="Jackson P."/>
            <person name="Munk A.C."/>
            <person name="Brettin T."/>
            <person name="Bruce D."/>
            <person name="Detter C."/>
            <person name="Tapia R."/>
            <person name="Han C."/>
            <person name="Sutton G."/>
            <person name="Sims D."/>
        </authorList>
    </citation>
    <scope>NUCLEOTIDE SEQUENCE [LARGE SCALE GENOMIC DNA]</scope>
    <source>
        <strain>03BB102</strain>
    </source>
</reference>